<keyword id="KW-0004">4Fe-4S</keyword>
<keyword id="KW-0408">Iron</keyword>
<keyword id="KW-0411">Iron-sulfur</keyword>
<keyword id="KW-0456">Lyase</keyword>
<keyword id="KW-0479">Metal-binding</keyword>
<keyword id="KW-0949">S-adenosyl-L-methionine</keyword>
<keyword id="KW-0784">Thiamine biosynthesis</keyword>
<keyword id="KW-0862">Zinc</keyword>
<feature type="chain" id="PRO_0000242254" description="Phosphomethylpyrimidine synthase">
    <location>
        <begin position="1"/>
        <end position="638"/>
    </location>
</feature>
<feature type="binding site" evidence="1">
    <location>
        <position position="243"/>
    </location>
    <ligand>
        <name>substrate</name>
    </ligand>
</feature>
<feature type="binding site" evidence="1">
    <location>
        <position position="272"/>
    </location>
    <ligand>
        <name>substrate</name>
    </ligand>
</feature>
<feature type="binding site" evidence="1">
    <location>
        <position position="301"/>
    </location>
    <ligand>
        <name>substrate</name>
    </ligand>
</feature>
<feature type="binding site" evidence="1">
    <location>
        <position position="337"/>
    </location>
    <ligand>
        <name>substrate</name>
    </ligand>
</feature>
<feature type="binding site" evidence="1">
    <location>
        <begin position="357"/>
        <end position="359"/>
    </location>
    <ligand>
        <name>substrate</name>
    </ligand>
</feature>
<feature type="binding site" evidence="1">
    <location>
        <begin position="398"/>
        <end position="401"/>
    </location>
    <ligand>
        <name>substrate</name>
    </ligand>
</feature>
<feature type="binding site" evidence="1">
    <location>
        <position position="437"/>
    </location>
    <ligand>
        <name>substrate</name>
    </ligand>
</feature>
<feature type="binding site" evidence="1">
    <location>
        <position position="441"/>
    </location>
    <ligand>
        <name>Zn(2+)</name>
        <dbReference type="ChEBI" id="CHEBI:29105"/>
    </ligand>
</feature>
<feature type="binding site" evidence="1">
    <location>
        <position position="464"/>
    </location>
    <ligand>
        <name>substrate</name>
    </ligand>
</feature>
<feature type="binding site" evidence="1">
    <location>
        <position position="505"/>
    </location>
    <ligand>
        <name>Zn(2+)</name>
        <dbReference type="ChEBI" id="CHEBI:29105"/>
    </ligand>
</feature>
<feature type="binding site" evidence="1">
    <location>
        <position position="585"/>
    </location>
    <ligand>
        <name>[4Fe-4S] cluster</name>
        <dbReference type="ChEBI" id="CHEBI:49883"/>
        <note>4Fe-4S-S-AdoMet</note>
    </ligand>
</feature>
<feature type="binding site" evidence="1">
    <location>
        <position position="588"/>
    </location>
    <ligand>
        <name>[4Fe-4S] cluster</name>
        <dbReference type="ChEBI" id="CHEBI:49883"/>
        <note>4Fe-4S-S-AdoMet</note>
    </ligand>
</feature>
<feature type="binding site" evidence="1">
    <location>
        <position position="593"/>
    </location>
    <ligand>
        <name>[4Fe-4S] cluster</name>
        <dbReference type="ChEBI" id="CHEBI:49883"/>
        <note>4Fe-4S-S-AdoMet</note>
    </ligand>
</feature>
<comment type="function">
    <text evidence="1">Catalyzes the synthesis of the hydroxymethylpyrimidine phosphate (HMP-P) moiety of thiamine from aminoimidazole ribotide (AIR) in a radical S-adenosyl-L-methionine (SAM)-dependent reaction.</text>
</comment>
<comment type="catalytic activity">
    <reaction evidence="1">
        <text>5-amino-1-(5-phospho-beta-D-ribosyl)imidazole + S-adenosyl-L-methionine = 4-amino-2-methyl-5-(phosphooxymethyl)pyrimidine + CO + 5'-deoxyadenosine + formate + L-methionine + 3 H(+)</text>
        <dbReference type="Rhea" id="RHEA:24840"/>
        <dbReference type="ChEBI" id="CHEBI:15378"/>
        <dbReference type="ChEBI" id="CHEBI:15740"/>
        <dbReference type="ChEBI" id="CHEBI:17245"/>
        <dbReference type="ChEBI" id="CHEBI:17319"/>
        <dbReference type="ChEBI" id="CHEBI:57844"/>
        <dbReference type="ChEBI" id="CHEBI:58354"/>
        <dbReference type="ChEBI" id="CHEBI:59789"/>
        <dbReference type="ChEBI" id="CHEBI:137981"/>
        <dbReference type="EC" id="4.1.99.17"/>
    </reaction>
</comment>
<comment type="cofactor">
    <cofactor evidence="1">
        <name>[4Fe-4S] cluster</name>
        <dbReference type="ChEBI" id="CHEBI:49883"/>
    </cofactor>
    <text evidence="1">Binds 1 [4Fe-4S] cluster per subunit. The cluster is coordinated with 3 cysteines and an exchangeable S-adenosyl-L-methionine.</text>
</comment>
<comment type="pathway">
    <text evidence="1">Cofactor biosynthesis; thiamine diphosphate biosynthesis.</text>
</comment>
<comment type="subunit">
    <text evidence="1">Homodimer.</text>
</comment>
<comment type="similarity">
    <text evidence="1">Belongs to the ThiC family.</text>
</comment>
<gene>
    <name evidence="1" type="primary">thiC</name>
    <name type="ordered locus">Daro_3921</name>
</gene>
<dbReference type="EC" id="4.1.99.17" evidence="1"/>
<dbReference type="EMBL" id="CP000089">
    <property type="protein sequence ID" value="AAZ48649.1"/>
    <property type="molecule type" value="Genomic_DNA"/>
</dbReference>
<dbReference type="SMR" id="Q478T2"/>
<dbReference type="STRING" id="159087.Daro_3921"/>
<dbReference type="KEGG" id="dar:Daro_3921"/>
<dbReference type="eggNOG" id="COG0422">
    <property type="taxonomic scope" value="Bacteria"/>
</dbReference>
<dbReference type="HOGENOM" id="CLU_013181_2_1_4"/>
<dbReference type="OrthoDB" id="9805897at2"/>
<dbReference type="UniPathway" id="UPA00060"/>
<dbReference type="GO" id="GO:0005829">
    <property type="term" value="C:cytosol"/>
    <property type="evidence" value="ECO:0007669"/>
    <property type="project" value="TreeGrafter"/>
</dbReference>
<dbReference type="GO" id="GO:0051539">
    <property type="term" value="F:4 iron, 4 sulfur cluster binding"/>
    <property type="evidence" value="ECO:0007669"/>
    <property type="project" value="UniProtKB-KW"/>
</dbReference>
<dbReference type="GO" id="GO:0016830">
    <property type="term" value="F:carbon-carbon lyase activity"/>
    <property type="evidence" value="ECO:0007669"/>
    <property type="project" value="InterPro"/>
</dbReference>
<dbReference type="GO" id="GO:0008270">
    <property type="term" value="F:zinc ion binding"/>
    <property type="evidence" value="ECO:0007669"/>
    <property type="project" value="UniProtKB-UniRule"/>
</dbReference>
<dbReference type="GO" id="GO:0009228">
    <property type="term" value="P:thiamine biosynthetic process"/>
    <property type="evidence" value="ECO:0007669"/>
    <property type="project" value="UniProtKB-KW"/>
</dbReference>
<dbReference type="GO" id="GO:0009229">
    <property type="term" value="P:thiamine diphosphate biosynthetic process"/>
    <property type="evidence" value="ECO:0007669"/>
    <property type="project" value="UniProtKB-UniRule"/>
</dbReference>
<dbReference type="FunFam" id="3.20.20.540:FF:000001">
    <property type="entry name" value="Phosphomethylpyrimidine synthase"/>
    <property type="match status" value="1"/>
</dbReference>
<dbReference type="Gene3D" id="6.10.250.620">
    <property type="match status" value="1"/>
</dbReference>
<dbReference type="Gene3D" id="3.20.20.540">
    <property type="entry name" value="Radical SAM ThiC family, central domain"/>
    <property type="match status" value="1"/>
</dbReference>
<dbReference type="HAMAP" id="MF_00089">
    <property type="entry name" value="ThiC"/>
    <property type="match status" value="1"/>
</dbReference>
<dbReference type="InterPro" id="IPR037509">
    <property type="entry name" value="ThiC"/>
</dbReference>
<dbReference type="InterPro" id="IPR025747">
    <property type="entry name" value="ThiC-associated_dom"/>
</dbReference>
<dbReference type="InterPro" id="IPR038521">
    <property type="entry name" value="ThiC/Bza_core_dom"/>
</dbReference>
<dbReference type="InterPro" id="IPR002817">
    <property type="entry name" value="ThiC/BzaA/B"/>
</dbReference>
<dbReference type="NCBIfam" id="NF006763">
    <property type="entry name" value="PRK09284.1"/>
    <property type="match status" value="1"/>
</dbReference>
<dbReference type="NCBIfam" id="NF009895">
    <property type="entry name" value="PRK13352.1"/>
    <property type="match status" value="1"/>
</dbReference>
<dbReference type="NCBIfam" id="TIGR00190">
    <property type="entry name" value="thiC"/>
    <property type="match status" value="1"/>
</dbReference>
<dbReference type="PANTHER" id="PTHR30557:SF1">
    <property type="entry name" value="PHOSPHOMETHYLPYRIMIDINE SYNTHASE, CHLOROPLASTIC"/>
    <property type="match status" value="1"/>
</dbReference>
<dbReference type="PANTHER" id="PTHR30557">
    <property type="entry name" value="THIAMINE BIOSYNTHESIS PROTEIN THIC"/>
    <property type="match status" value="1"/>
</dbReference>
<dbReference type="Pfam" id="PF13667">
    <property type="entry name" value="ThiC-associated"/>
    <property type="match status" value="1"/>
</dbReference>
<dbReference type="Pfam" id="PF01964">
    <property type="entry name" value="ThiC_Rad_SAM"/>
    <property type="match status" value="1"/>
</dbReference>
<dbReference type="SFLD" id="SFLDF00407">
    <property type="entry name" value="phosphomethylpyrimidine_syntha"/>
    <property type="match status" value="1"/>
</dbReference>
<dbReference type="SFLD" id="SFLDG01114">
    <property type="entry name" value="phosphomethylpyrimidine_syntha"/>
    <property type="match status" value="1"/>
</dbReference>
<dbReference type="SFLD" id="SFLDS00113">
    <property type="entry name" value="Radical_SAM_Phosphomethylpyrim"/>
    <property type="match status" value="1"/>
</dbReference>
<organism>
    <name type="scientific">Dechloromonas aromatica (strain RCB)</name>
    <dbReference type="NCBI Taxonomy" id="159087"/>
    <lineage>
        <taxon>Bacteria</taxon>
        <taxon>Pseudomonadati</taxon>
        <taxon>Pseudomonadota</taxon>
        <taxon>Betaproteobacteria</taxon>
        <taxon>Rhodocyclales</taxon>
        <taxon>Azonexaceae</taxon>
        <taxon>Dechloromonas</taxon>
    </lineage>
</organism>
<evidence type="ECO:0000255" key="1">
    <source>
        <dbReference type="HAMAP-Rule" id="MF_00089"/>
    </source>
</evidence>
<name>THIC_DECAR</name>
<reference key="1">
    <citation type="journal article" date="2009" name="BMC Genomics">
        <title>Metabolic analysis of the soil microbe Dechloromonas aromatica str. RCB: indications of a surprisingly complex life-style and cryptic anaerobic pathways for aromatic degradation.</title>
        <authorList>
            <person name="Salinero K.K."/>
            <person name="Keller K."/>
            <person name="Feil W.S."/>
            <person name="Feil H."/>
            <person name="Trong S."/>
            <person name="Di Bartolo G."/>
            <person name="Lapidus A."/>
        </authorList>
    </citation>
    <scope>NUCLEOTIDE SEQUENCE [LARGE SCALE GENOMIC DNA]</scope>
    <source>
        <strain>RCB</strain>
    </source>
</reference>
<sequence>MNATEQFLAANAHVDEAAVQPLPNSRKIYVEGSRPDIRVPMREVSQDDTPTAFGGEKNPPIYVYDCSGPYSDPAAKIDIRSGLPALRAQWIAERGDVEALADLSSEFGRQRAADPKLDELRFPGLHRKPLRAKAGQNVSQMHYARRGIITPEMEYVAIRENNNRRAYIESLKATGPMGNRMADILGRQHKGQDFGASIPEEITPEFVRSEIARGRAIIPNNINHPESEPMIIGRNFLVKINANIGNSALGSSIQEEVEKMTWSIRWGGDTVMDLSTGKNIHETREWIIRNSPVPIGTVPIYQALEKVNGKAEDLTWEIFRDTLIEQAEQGVDYFTIHAGVLLRYVPMTANRLTGIVSRGGSIMAKWCLAHHKESFLYTHFEEICEIMKAYDVAFSLGDGLRPGSIYDANDEAQLGELETLGELTKIAWKHDVQVIIEGPGHVPMHMIKENMDLQLKHCDEAPFYTLGPLTTDIAPGYDHITSGIGAAMIGWYGTAMLCYVTPKEHLGLPDKDDVKEGIITYKLAAHAADLAKGHPGAQIRDNALSKARFEFRWDDQFNLGLDPDKAREFHDETLPKESAKVAHFCSMCGPHFCSMKITQEVREFAAQQGLDEAAALEKGMEVKSVEFVKAGAEVYSKI</sequence>
<proteinExistence type="inferred from homology"/>
<accession>Q478T2</accession>
<protein>
    <recommendedName>
        <fullName evidence="1">Phosphomethylpyrimidine synthase</fullName>
        <ecNumber evidence="1">4.1.99.17</ecNumber>
    </recommendedName>
    <alternativeName>
        <fullName evidence="1">Hydroxymethylpyrimidine phosphate synthase</fullName>
        <shortName evidence="1">HMP-P synthase</shortName>
        <shortName evidence="1">HMP-phosphate synthase</shortName>
        <shortName evidence="1">HMPP synthase</shortName>
    </alternativeName>
    <alternativeName>
        <fullName evidence="1">Thiamine biosynthesis protein ThiC</fullName>
    </alternativeName>
</protein>